<proteinExistence type="inferred from homology"/>
<evidence type="ECO:0000255" key="1">
    <source>
        <dbReference type="HAMAP-Rule" id="MF_00580"/>
    </source>
</evidence>
<name>CH10_STACT</name>
<gene>
    <name evidence="1" type="primary">groES</name>
    <name evidence="1" type="synonym">groS</name>
    <name type="ordered locus">Sca_1541</name>
</gene>
<dbReference type="EMBL" id="AM295250">
    <property type="protein sequence ID" value="CAL28446.1"/>
    <property type="molecule type" value="Genomic_DNA"/>
</dbReference>
<dbReference type="RefSeq" id="WP_015900786.1">
    <property type="nucleotide sequence ID" value="NC_012121.1"/>
</dbReference>
<dbReference type="SMR" id="B9DMM3"/>
<dbReference type="GeneID" id="93793992"/>
<dbReference type="KEGG" id="sca:SCA_1541"/>
<dbReference type="eggNOG" id="COG0234">
    <property type="taxonomic scope" value="Bacteria"/>
</dbReference>
<dbReference type="HOGENOM" id="CLU_132825_2_1_9"/>
<dbReference type="OrthoDB" id="9806791at2"/>
<dbReference type="BioCyc" id="SCAR396513:SCA_RS07810-MONOMER"/>
<dbReference type="Proteomes" id="UP000000444">
    <property type="component" value="Chromosome"/>
</dbReference>
<dbReference type="GO" id="GO:0005737">
    <property type="term" value="C:cytoplasm"/>
    <property type="evidence" value="ECO:0007669"/>
    <property type="project" value="UniProtKB-SubCell"/>
</dbReference>
<dbReference type="GO" id="GO:0005524">
    <property type="term" value="F:ATP binding"/>
    <property type="evidence" value="ECO:0007669"/>
    <property type="project" value="InterPro"/>
</dbReference>
<dbReference type="GO" id="GO:0046872">
    <property type="term" value="F:metal ion binding"/>
    <property type="evidence" value="ECO:0007669"/>
    <property type="project" value="TreeGrafter"/>
</dbReference>
<dbReference type="GO" id="GO:0044183">
    <property type="term" value="F:protein folding chaperone"/>
    <property type="evidence" value="ECO:0007669"/>
    <property type="project" value="InterPro"/>
</dbReference>
<dbReference type="GO" id="GO:0051087">
    <property type="term" value="F:protein-folding chaperone binding"/>
    <property type="evidence" value="ECO:0007669"/>
    <property type="project" value="TreeGrafter"/>
</dbReference>
<dbReference type="GO" id="GO:0051082">
    <property type="term" value="F:unfolded protein binding"/>
    <property type="evidence" value="ECO:0007669"/>
    <property type="project" value="TreeGrafter"/>
</dbReference>
<dbReference type="GO" id="GO:0051085">
    <property type="term" value="P:chaperone cofactor-dependent protein refolding"/>
    <property type="evidence" value="ECO:0007669"/>
    <property type="project" value="TreeGrafter"/>
</dbReference>
<dbReference type="CDD" id="cd00320">
    <property type="entry name" value="cpn10"/>
    <property type="match status" value="1"/>
</dbReference>
<dbReference type="FunFam" id="2.30.33.40:FF:000001">
    <property type="entry name" value="10 kDa chaperonin"/>
    <property type="match status" value="1"/>
</dbReference>
<dbReference type="Gene3D" id="2.30.33.40">
    <property type="entry name" value="GroES chaperonin"/>
    <property type="match status" value="1"/>
</dbReference>
<dbReference type="HAMAP" id="MF_00580">
    <property type="entry name" value="CH10"/>
    <property type="match status" value="1"/>
</dbReference>
<dbReference type="InterPro" id="IPR020818">
    <property type="entry name" value="Chaperonin_GroES"/>
</dbReference>
<dbReference type="InterPro" id="IPR037124">
    <property type="entry name" value="Chaperonin_GroES_sf"/>
</dbReference>
<dbReference type="InterPro" id="IPR018369">
    <property type="entry name" value="Chaprnonin_Cpn10_CS"/>
</dbReference>
<dbReference type="InterPro" id="IPR011032">
    <property type="entry name" value="GroES-like_sf"/>
</dbReference>
<dbReference type="NCBIfam" id="NF001531">
    <property type="entry name" value="PRK00364.2-2"/>
    <property type="match status" value="1"/>
</dbReference>
<dbReference type="NCBIfam" id="NF001532">
    <property type="entry name" value="PRK00364.2-3"/>
    <property type="match status" value="1"/>
</dbReference>
<dbReference type="NCBIfam" id="NF001533">
    <property type="entry name" value="PRK00364.2-4"/>
    <property type="match status" value="1"/>
</dbReference>
<dbReference type="NCBIfam" id="NF001534">
    <property type="entry name" value="PRK00364.2-5"/>
    <property type="match status" value="1"/>
</dbReference>
<dbReference type="PANTHER" id="PTHR10772">
    <property type="entry name" value="10 KDA HEAT SHOCK PROTEIN"/>
    <property type="match status" value="1"/>
</dbReference>
<dbReference type="PANTHER" id="PTHR10772:SF58">
    <property type="entry name" value="CO-CHAPERONIN GROES"/>
    <property type="match status" value="1"/>
</dbReference>
<dbReference type="Pfam" id="PF00166">
    <property type="entry name" value="Cpn10"/>
    <property type="match status" value="1"/>
</dbReference>
<dbReference type="PRINTS" id="PR00297">
    <property type="entry name" value="CHAPERONIN10"/>
</dbReference>
<dbReference type="SMART" id="SM00883">
    <property type="entry name" value="Cpn10"/>
    <property type="match status" value="1"/>
</dbReference>
<dbReference type="SUPFAM" id="SSF50129">
    <property type="entry name" value="GroES-like"/>
    <property type="match status" value="1"/>
</dbReference>
<dbReference type="PROSITE" id="PS00681">
    <property type="entry name" value="CHAPERONINS_CPN10"/>
    <property type="match status" value="1"/>
</dbReference>
<feature type="chain" id="PRO_1000146916" description="Co-chaperonin GroES">
    <location>
        <begin position="1"/>
        <end position="94"/>
    </location>
</feature>
<accession>B9DMM3</accession>
<reference key="1">
    <citation type="journal article" date="2009" name="Appl. Environ. Microbiol.">
        <title>Genome analysis of the meat starter culture bacterium Staphylococcus carnosus TM300.</title>
        <authorList>
            <person name="Rosenstein R."/>
            <person name="Nerz C."/>
            <person name="Biswas L."/>
            <person name="Resch A."/>
            <person name="Raddatz G."/>
            <person name="Schuster S.C."/>
            <person name="Goetz F."/>
        </authorList>
    </citation>
    <scope>NUCLEOTIDE SEQUENCE [LARGE SCALE GENOMIC DNA]</scope>
    <source>
        <strain>TM300</strain>
    </source>
</reference>
<comment type="function">
    <text evidence="1">Together with the chaperonin GroEL, plays an essential role in assisting protein folding. The GroEL-GroES system forms a nano-cage that allows encapsulation of the non-native substrate proteins and provides a physical environment optimized to promote and accelerate protein folding. GroES binds to the apical surface of the GroEL ring, thereby capping the opening of the GroEL channel.</text>
</comment>
<comment type="subunit">
    <text evidence="1">Heptamer of 7 subunits arranged in a ring. Interacts with the chaperonin GroEL.</text>
</comment>
<comment type="subcellular location">
    <subcellularLocation>
        <location evidence="1">Cytoplasm</location>
    </subcellularLocation>
</comment>
<comment type="similarity">
    <text evidence="1">Belongs to the GroES chaperonin family.</text>
</comment>
<protein>
    <recommendedName>
        <fullName evidence="1">Co-chaperonin GroES</fullName>
    </recommendedName>
    <alternativeName>
        <fullName evidence="1">10 kDa chaperonin</fullName>
    </alternativeName>
    <alternativeName>
        <fullName evidence="1">Chaperonin-10</fullName>
        <shortName evidence="1">Cpn10</shortName>
    </alternativeName>
</protein>
<organism>
    <name type="scientific">Staphylococcus carnosus (strain TM300)</name>
    <dbReference type="NCBI Taxonomy" id="396513"/>
    <lineage>
        <taxon>Bacteria</taxon>
        <taxon>Bacillati</taxon>
        <taxon>Bacillota</taxon>
        <taxon>Bacilli</taxon>
        <taxon>Bacillales</taxon>
        <taxon>Staphylococcaceae</taxon>
        <taxon>Staphylococcus</taxon>
    </lineage>
</organism>
<keyword id="KW-0143">Chaperone</keyword>
<keyword id="KW-0963">Cytoplasm</keyword>
<keyword id="KW-1185">Reference proteome</keyword>
<sequence length="94" mass="10298">MLKPLGNRVIIKRVESEQTTKSGIVLTEKAKEKSNEGKVIAVGPGRLLDNGERVTPEVKEGDTVVFEQYAGSEVQVGEDKYLVISEEEVLAIVQ</sequence>